<protein>
    <recommendedName>
        <fullName evidence="1">Ribonuclease HII</fullName>
        <shortName evidence="1">RNase HII</shortName>
        <ecNumber evidence="1">3.1.26.4</ecNumber>
    </recommendedName>
</protein>
<proteinExistence type="inferred from homology"/>
<accession>Q57T25</accession>
<gene>
    <name evidence="1" type="primary">rnhB</name>
    <name type="ordered locus">SCH_0230</name>
</gene>
<organism>
    <name type="scientific">Salmonella choleraesuis (strain SC-B67)</name>
    <dbReference type="NCBI Taxonomy" id="321314"/>
    <lineage>
        <taxon>Bacteria</taxon>
        <taxon>Pseudomonadati</taxon>
        <taxon>Pseudomonadota</taxon>
        <taxon>Gammaproteobacteria</taxon>
        <taxon>Enterobacterales</taxon>
        <taxon>Enterobacteriaceae</taxon>
        <taxon>Salmonella</taxon>
    </lineage>
</organism>
<keyword id="KW-0963">Cytoplasm</keyword>
<keyword id="KW-0255">Endonuclease</keyword>
<keyword id="KW-0378">Hydrolase</keyword>
<keyword id="KW-0464">Manganese</keyword>
<keyword id="KW-0479">Metal-binding</keyword>
<keyword id="KW-0540">Nuclease</keyword>
<comment type="function">
    <text evidence="1">Endonuclease that specifically degrades the RNA of RNA-DNA hybrids.</text>
</comment>
<comment type="catalytic activity">
    <reaction evidence="1">
        <text>Endonucleolytic cleavage to 5'-phosphomonoester.</text>
        <dbReference type="EC" id="3.1.26.4"/>
    </reaction>
</comment>
<comment type="cofactor">
    <cofactor evidence="1">
        <name>Mn(2+)</name>
        <dbReference type="ChEBI" id="CHEBI:29035"/>
    </cofactor>
    <cofactor evidence="1">
        <name>Mg(2+)</name>
        <dbReference type="ChEBI" id="CHEBI:18420"/>
    </cofactor>
    <text evidence="1">Manganese or magnesium. Binds 1 divalent metal ion per monomer in the absence of substrate. May bind a second metal ion after substrate binding.</text>
</comment>
<comment type="subcellular location">
    <subcellularLocation>
        <location evidence="1">Cytoplasm</location>
    </subcellularLocation>
</comment>
<comment type="similarity">
    <text evidence="1">Belongs to the RNase HII family.</text>
</comment>
<dbReference type="EC" id="3.1.26.4" evidence="1"/>
<dbReference type="EMBL" id="AE017220">
    <property type="protein sequence ID" value="AAX64136.1"/>
    <property type="molecule type" value="Genomic_DNA"/>
</dbReference>
<dbReference type="RefSeq" id="WP_000569411.1">
    <property type="nucleotide sequence ID" value="NC_006905.1"/>
</dbReference>
<dbReference type="SMR" id="Q57T25"/>
<dbReference type="KEGG" id="sec:SCH_0230"/>
<dbReference type="HOGENOM" id="CLU_036532_3_2_6"/>
<dbReference type="Proteomes" id="UP000000538">
    <property type="component" value="Chromosome"/>
</dbReference>
<dbReference type="GO" id="GO:0005737">
    <property type="term" value="C:cytoplasm"/>
    <property type="evidence" value="ECO:0007669"/>
    <property type="project" value="UniProtKB-SubCell"/>
</dbReference>
<dbReference type="GO" id="GO:0032299">
    <property type="term" value="C:ribonuclease H2 complex"/>
    <property type="evidence" value="ECO:0007669"/>
    <property type="project" value="TreeGrafter"/>
</dbReference>
<dbReference type="GO" id="GO:0030145">
    <property type="term" value="F:manganese ion binding"/>
    <property type="evidence" value="ECO:0007669"/>
    <property type="project" value="UniProtKB-UniRule"/>
</dbReference>
<dbReference type="GO" id="GO:0003723">
    <property type="term" value="F:RNA binding"/>
    <property type="evidence" value="ECO:0007669"/>
    <property type="project" value="InterPro"/>
</dbReference>
<dbReference type="GO" id="GO:0004523">
    <property type="term" value="F:RNA-DNA hybrid ribonuclease activity"/>
    <property type="evidence" value="ECO:0007669"/>
    <property type="project" value="UniProtKB-UniRule"/>
</dbReference>
<dbReference type="GO" id="GO:0043137">
    <property type="term" value="P:DNA replication, removal of RNA primer"/>
    <property type="evidence" value="ECO:0007669"/>
    <property type="project" value="TreeGrafter"/>
</dbReference>
<dbReference type="GO" id="GO:0006298">
    <property type="term" value="P:mismatch repair"/>
    <property type="evidence" value="ECO:0007669"/>
    <property type="project" value="TreeGrafter"/>
</dbReference>
<dbReference type="CDD" id="cd07182">
    <property type="entry name" value="RNase_HII_bacteria_HII_like"/>
    <property type="match status" value="1"/>
</dbReference>
<dbReference type="FunFam" id="3.30.420.10:FF:000006">
    <property type="entry name" value="Ribonuclease HII"/>
    <property type="match status" value="1"/>
</dbReference>
<dbReference type="Gene3D" id="3.30.420.10">
    <property type="entry name" value="Ribonuclease H-like superfamily/Ribonuclease H"/>
    <property type="match status" value="1"/>
</dbReference>
<dbReference type="HAMAP" id="MF_00052_B">
    <property type="entry name" value="RNase_HII_B"/>
    <property type="match status" value="1"/>
</dbReference>
<dbReference type="InterPro" id="IPR022898">
    <property type="entry name" value="RNase_HII"/>
</dbReference>
<dbReference type="InterPro" id="IPR001352">
    <property type="entry name" value="RNase_HII/HIII"/>
</dbReference>
<dbReference type="InterPro" id="IPR024567">
    <property type="entry name" value="RNase_HII/HIII_dom"/>
</dbReference>
<dbReference type="InterPro" id="IPR012337">
    <property type="entry name" value="RNaseH-like_sf"/>
</dbReference>
<dbReference type="InterPro" id="IPR036397">
    <property type="entry name" value="RNaseH_sf"/>
</dbReference>
<dbReference type="NCBIfam" id="NF000594">
    <property type="entry name" value="PRK00015.1-1"/>
    <property type="match status" value="1"/>
</dbReference>
<dbReference type="NCBIfam" id="NF000595">
    <property type="entry name" value="PRK00015.1-3"/>
    <property type="match status" value="1"/>
</dbReference>
<dbReference type="NCBIfam" id="NF000596">
    <property type="entry name" value="PRK00015.1-4"/>
    <property type="match status" value="1"/>
</dbReference>
<dbReference type="PANTHER" id="PTHR10954">
    <property type="entry name" value="RIBONUCLEASE H2 SUBUNIT A"/>
    <property type="match status" value="1"/>
</dbReference>
<dbReference type="PANTHER" id="PTHR10954:SF18">
    <property type="entry name" value="RIBONUCLEASE HII"/>
    <property type="match status" value="1"/>
</dbReference>
<dbReference type="Pfam" id="PF01351">
    <property type="entry name" value="RNase_HII"/>
    <property type="match status" value="1"/>
</dbReference>
<dbReference type="SUPFAM" id="SSF53098">
    <property type="entry name" value="Ribonuclease H-like"/>
    <property type="match status" value="1"/>
</dbReference>
<dbReference type="PROSITE" id="PS51975">
    <property type="entry name" value="RNASE_H_2"/>
    <property type="match status" value="1"/>
</dbReference>
<reference key="1">
    <citation type="journal article" date="2005" name="Nucleic Acids Res.">
        <title>The genome sequence of Salmonella enterica serovar Choleraesuis, a highly invasive and resistant zoonotic pathogen.</title>
        <authorList>
            <person name="Chiu C.-H."/>
            <person name="Tang P."/>
            <person name="Chu C."/>
            <person name="Hu S."/>
            <person name="Bao Q."/>
            <person name="Yu J."/>
            <person name="Chou Y.-Y."/>
            <person name="Wang H.-S."/>
            <person name="Lee Y.-S."/>
        </authorList>
    </citation>
    <scope>NUCLEOTIDE SEQUENCE [LARGE SCALE GENOMIC DNA]</scope>
    <source>
        <strain>SC-B67</strain>
    </source>
</reference>
<sequence>MIEFVYPHTHLVAGVDEVGRGPLVGAVVTAAVILDPARPIVGLNDSKKLSEKRRLSLYDEIKEKALSWSLGRAEAHEIDELNILHATMLAMQRAVAGLHIAPEYVLIDGNRCPALPVPSMAVVKGDSRVAEISAASILAKVTRDAEMAALDIVFPQYGFAQHKGYPTAFHLEKLAQYGATAHHRRSFAPVKRALGLVS</sequence>
<name>RNH2_SALCH</name>
<feature type="chain" id="PRO_0000111615" description="Ribonuclease HII">
    <location>
        <begin position="1"/>
        <end position="198"/>
    </location>
</feature>
<feature type="domain" description="RNase H type-2" evidence="2">
    <location>
        <begin position="10"/>
        <end position="198"/>
    </location>
</feature>
<feature type="binding site" evidence="1">
    <location>
        <position position="16"/>
    </location>
    <ligand>
        <name>a divalent metal cation</name>
        <dbReference type="ChEBI" id="CHEBI:60240"/>
    </ligand>
</feature>
<feature type="binding site" evidence="1">
    <location>
        <position position="17"/>
    </location>
    <ligand>
        <name>a divalent metal cation</name>
        <dbReference type="ChEBI" id="CHEBI:60240"/>
    </ligand>
</feature>
<feature type="binding site" evidence="1">
    <location>
        <position position="108"/>
    </location>
    <ligand>
        <name>a divalent metal cation</name>
        <dbReference type="ChEBI" id="CHEBI:60240"/>
    </ligand>
</feature>
<evidence type="ECO:0000255" key="1">
    <source>
        <dbReference type="HAMAP-Rule" id="MF_00052"/>
    </source>
</evidence>
<evidence type="ECO:0000255" key="2">
    <source>
        <dbReference type="PROSITE-ProRule" id="PRU01319"/>
    </source>
</evidence>